<evidence type="ECO:0000250" key="1"/>
<evidence type="ECO:0000250" key="2">
    <source>
        <dbReference type="UniProtKB" id="P06773"/>
    </source>
</evidence>
<evidence type="ECO:0000250" key="3">
    <source>
        <dbReference type="UniProtKB" id="Q12178"/>
    </source>
</evidence>
<evidence type="ECO:0000255" key="4"/>
<evidence type="ECO:0000255" key="5">
    <source>
        <dbReference type="PROSITE-ProRule" id="PRU01083"/>
    </source>
</evidence>
<evidence type="ECO:0000269" key="6">
    <source>
    </source>
</evidence>
<evidence type="ECO:0000305" key="7"/>
<comment type="function">
    <text evidence="2">Supplies the nucleotide substrate for thymidylate synthetase.</text>
</comment>
<comment type="catalytic activity">
    <reaction evidence="2">
        <text>dCMP + H2O + H(+) = dUMP + NH4(+)</text>
        <dbReference type="Rhea" id="RHEA:22924"/>
        <dbReference type="ChEBI" id="CHEBI:15377"/>
        <dbReference type="ChEBI" id="CHEBI:15378"/>
        <dbReference type="ChEBI" id="CHEBI:28938"/>
        <dbReference type="ChEBI" id="CHEBI:57566"/>
        <dbReference type="ChEBI" id="CHEBI:246422"/>
        <dbReference type="EC" id="3.5.4.12"/>
    </reaction>
</comment>
<comment type="cofactor">
    <cofactor evidence="3">
        <name>Zn(2+)</name>
        <dbReference type="ChEBI" id="CHEBI:29105"/>
    </cofactor>
</comment>
<comment type="subcellular location">
    <subcellularLocation>
        <location evidence="6">Cytoplasm</location>
    </subcellularLocation>
    <subcellularLocation>
        <location evidence="6">Nucleus</location>
    </subcellularLocation>
</comment>
<comment type="similarity">
    <text evidence="4">Belongs to the cytidine and deoxycytidylate deaminase family.</text>
</comment>
<accession>O43012</accession>
<reference key="1">
    <citation type="journal article" date="2002" name="Nature">
        <title>The genome sequence of Schizosaccharomyces pombe.</title>
        <authorList>
            <person name="Wood V."/>
            <person name="Gwilliam R."/>
            <person name="Rajandream M.A."/>
            <person name="Lyne M.H."/>
            <person name="Lyne R."/>
            <person name="Stewart A."/>
            <person name="Sgouros J.G."/>
            <person name="Peat N."/>
            <person name="Hayles J."/>
            <person name="Baker S.G."/>
            <person name="Basham D."/>
            <person name="Bowman S."/>
            <person name="Brooks K."/>
            <person name="Brown D."/>
            <person name="Brown S."/>
            <person name="Chillingworth T."/>
            <person name="Churcher C.M."/>
            <person name="Collins M."/>
            <person name="Connor R."/>
            <person name="Cronin A."/>
            <person name="Davis P."/>
            <person name="Feltwell T."/>
            <person name="Fraser A."/>
            <person name="Gentles S."/>
            <person name="Goble A."/>
            <person name="Hamlin N."/>
            <person name="Harris D.E."/>
            <person name="Hidalgo J."/>
            <person name="Hodgson G."/>
            <person name="Holroyd S."/>
            <person name="Hornsby T."/>
            <person name="Howarth S."/>
            <person name="Huckle E.J."/>
            <person name="Hunt S."/>
            <person name="Jagels K."/>
            <person name="James K.D."/>
            <person name="Jones L."/>
            <person name="Jones M."/>
            <person name="Leather S."/>
            <person name="McDonald S."/>
            <person name="McLean J."/>
            <person name="Mooney P."/>
            <person name="Moule S."/>
            <person name="Mungall K.L."/>
            <person name="Murphy L.D."/>
            <person name="Niblett D."/>
            <person name="Odell C."/>
            <person name="Oliver K."/>
            <person name="O'Neil S."/>
            <person name="Pearson D."/>
            <person name="Quail M.A."/>
            <person name="Rabbinowitsch E."/>
            <person name="Rutherford K.M."/>
            <person name="Rutter S."/>
            <person name="Saunders D."/>
            <person name="Seeger K."/>
            <person name="Sharp S."/>
            <person name="Skelton J."/>
            <person name="Simmonds M.N."/>
            <person name="Squares R."/>
            <person name="Squares S."/>
            <person name="Stevens K."/>
            <person name="Taylor K."/>
            <person name="Taylor R.G."/>
            <person name="Tivey A."/>
            <person name="Walsh S.V."/>
            <person name="Warren T."/>
            <person name="Whitehead S."/>
            <person name="Woodward J.R."/>
            <person name="Volckaert G."/>
            <person name="Aert R."/>
            <person name="Robben J."/>
            <person name="Grymonprez B."/>
            <person name="Weltjens I."/>
            <person name="Vanstreels E."/>
            <person name="Rieger M."/>
            <person name="Schaefer M."/>
            <person name="Mueller-Auer S."/>
            <person name="Gabel C."/>
            <person name="Fuchs M."/>
            <person name="Duesterhoeft A."/>
            <person name="Fritzc C."/>
            <person name="Holzer E."/>
            <person name="Moestl D."/>
            <person name="Hilbert H."/>
            <person name="Borzym K."/>
            <person name="Langer I."/>
            <person name="Beck A."/>
            <person name="Lehrach H."/>
            <person name="Reinhardt R."/>
            <person name="Pohl T.M."/>
            <person name="Eger P."/>
            <person name="Zimmermann W."/>
            <person name="Wedler H."/>
            <person name="Wambutt R."/>
            <person name="Purnelle B."/>
            <person name="Goffeau A."/>
            <person name="Cadieu E."/>
            <person name="Dreano S."/>
            <person name="Gloux S."/>
            <person name="Lelaure V."/>
            <person name="Mottier S."/>
            <person name="Galibert F."/>
            <person name="Aves S.J."/>
            <person name="Xiang Z."/>
            <person name="Hunt C."/>
            <person name="Moore K."/>
            <person name="Hurst S.M."/>
            <person name="Lucas M."/>
            <person name="Rochet M."/>
            <person name="Gaillardin C."/>
            <person name="Tallada V.A."/>
            <person name="Garzon A."/>
            <person name="Thode G."/>
            <person name="Daga R.R."/>
            <person name="Cruzado L."/>
            <person name="Jimenez J."/>
            <person name="Sanchez M."/>
            <person name="del Rey F."/>
            <person name="Benito J."/>
            <person name="Dominguez A."/>
            <person name="Revuelta J.L."/>
            <person name="Moreno S."/>
            <person name="Armstrong J."/>
            <person name="Forsburg S.L."/>
            <person name="Cerutti L."/>
            <person name="Lowe T."/>
            <person name="McCombie W.R."/>
            <person name="Paulsen I."/>
            <person name="Potashkin J."/>
            <person name="Shpakovski G.V."/>
            <person name="Ussery D."/>
            <person name="Barrell B.G."/>
            <person name="Nurse P."/>
        </authorList>
    </citation>
    <scope>NUCLEOTIDE SEQUENCE [LARGE SCALE GENOMIC DNA]</scope>
    <source>
        <strain>972 / ATCC 24843</strain>
    </source>
</reference>
<reference key="2">
    <citation type="journal article" date="2011" name="Science">
        <title>Comparative functional genomics of the fission yeasts.</title>
        <authorList>
            <person name="Rhind N."/>
            <person name="Chen Z."/>
            <person name="Yassour M."/>
            <person name="Thompson D.A."/>
            <person name="Haas B.J."/>
            <person name="Habib N."/>
            <person name="Wapinski I."/>
            <person name="Roy S."/>
            <person name="Lin M.F."/>
            <person name="Heiman D.I."/>
            <person name="Young S.K."/>
            <person name="Furuya K."/>
            <person name="Guo Y."/>
            <person name="Pidoux A."/>
            <person name="Chen H.M."/>
            <person name="Robbertse B."/>
            <person name="Goldberg J.M."/>
            <person name="Aoki K."/>
            <person name="Bayne E.H."/>
            <person name="Berlin A.M."/>
            <person name="Desjardins C.A."/>
            <person name="Dobbs E."/>
            <person name="Dukaj L."/>
            <person name="Fan L."/>
            <person name="FitzGerald M.G."/>
            <person name="French C."/>
            <person name="Gujja S."/>
            <person name="Hansen K."/>
            <person name="Keifenheim D."/>
            <person name="Levin J.Z."/>
            <person name="Mosher R.A."/>
            <person name="Mueller C.A."/>
            <person name="Pfiffner J."/>
            <person name="Priest M."/>
            <person name="Russ C."/>
            <person name="Smialowska A."/>
            <person name="Swoboda P."/>
            <person name="Sykes S.M."/>
            <person name="Vaughn M."/>
            <person name="Vengrova S."/>
            <person name="Yoder R."/>
            <person name="Zeng Q."/>
            <person name="Allshire R."/>
            <person name="Baulcombe D."/>
            <person name="Birren B.W."/>
            <person name="Brown W."/>
            <person name="Ekwall K."/>
            <person name="Kellis M."/>
            <person name="Leatherwood J."/>
            <person name="Levin H."/>
            <person name="Margalit H."/>
            <person name="Martienssen R."/>
            <person name="Nieduszynski C.A."/>
            <person name="Spatafora J.W."/>
            <person name="Friedman N."/>
            <person name="Dalgaard J.Z."/>
            <person name="Baumann P."/>
            <person name="Niki H."/>
            <person name="Regev A."/>
            <person name="Nusbaum C."/>
        </authorList>
    </citation>
    <scope>REVISION OF GENE MODEL</scope>
</reference>
<reference evidence="7" key="3">
    <citation type="journal article" date="2006" name="Nat. Biotechnol.">
        <title>ORFeome cloning and global analysis of protein localization in the fission yeast Schizosaccharomyces pombe.</title>
        <authorList>
            <person name="Matsuyama A."/>
            <person name="Arai R."/>
            <person name="Yashiroda Y."/>
            <person name="Shirai A."/>
            <person name="Kamata A."/>
            <person name="Sekido S."/>
            <person name="Kobayashi Y."/>
            <person name="Hashimoto A."/>
            <person name="Hamamoto M."/>
            <person name="Hiraoka Y."/>
            <person name="Horinouchi S."/>
            <person name="Yoshida M."/>
        </authorList>
    </citation>
    <scope>SUBCELLULAR LOCATION [LARGE SCALE ANALYSIS]</scope>
</reference>
<gene>
    <name type="ORF">SPBC2G2.13c</name>
</gene>
<dbReference type="EC" id="3.5.4.12"/>
<dbReference type="EMBL" id="CU329671">
    <property type="protein sequence ID" value="CAA17893.2"/>
    <property type="molecule type" value="Genomic_DNA"/>
</dbReference>
<dbReference type="PIR" id="T40152">
    <property type="entry name" value="T40152"/>
</dbReference>
<dbReference type="SMR" id="O43012"/>
<dbReference type="BioGRID" id="276867">
    <property type="interactions" value="72"/>
</dbReference>
<dbReference type="FunCoup" id="O43012">
    <property type="interactions" value="59"/>
</dbReference>
<dbReference type="STRING" id="284812.O43012"/>
<dbReference type="iPTMnet" id="O43012"/>
<dbReference type="PaxDb" id="4896-SPBC2G2.13c.1"/>
<dbReference type="EnsemblFungi" id="SPBC2G2.13c.1">
    <property type="protein sequence ID" value="SPBC2G2.13c.1:pep"/>
    <property type="gene ID" value="SPBC2G2.13c"/>
</dbReference>
<dbReference type="KEGG" id="spo:2540338"/>
<dbReference type="PomBase" id="SPBC2G2.13c"/>
<dbReference type="VEuPathDB" id="FungiDB:SPBC2G2.13c"/>
<dbReference type="eggNOG" id="KOG3127">
    <property type="taxonomic scope" value="Eukaryota"/>
</dbReference>
<dbReference type="HOGENOM" id="CLU_047993_0_0_1"/>
<dbReference type="InParanoid" id="O43012"/>
<dbReference type="OMA" id="YFMRLAD"/>
<dbReference type="PRO" id="PR:O43012"/>
<dbReference type="Proteomes" id="UP000002485">
    <property type="component" value="Chromosome II"/>
</dbReference>
<dbReference type="GO" id="GO:0005737">
    <property type="term" value="C:cytoplasm"/>
    <property type="evidence" value="ECO:0000318"/>
    <property type="project" value="GO_Central"/>
</dbReference>
<dbReference type="GO" id="GO:0005829">
    <property type="term" value="C:cytosol"/>
    <property type="evidence" value="ECO:0007005"/>
    <property type="project" value="PomBase"/>
</dbReference>
<dbReference type="GO" id="GO:0005634">
    <property type="term" value="C:nucleus"/>
    <property type="evidence" value="ECO:0007005"/>
    <property type="project" value="PomBase"/>
</dbReference>
<dbReference type="GO" id="GO:0004132">
    <property type="term" value="F:dCMP deaminase activity"/>
    <property type="evidence" value="ECO:0000318"/>
    <property type="project" value="GO_Central"/>
</dbReference>
<dbReference type="GO" id="GO:0008270">
    <property type="term" value="F:zinc ion binding"/>
    <property type="evidence" value="ECO:0007669"/>
    <property type="project" value="InterPro"/>
</dbReference>
<dbReference type="GO" id="GO:0009972">
    <property type="term" value="P:cytidine deamination"/>
    <property type="evidence" value="ECO:0000318"/>
    <property type="project" value="GO_Central"/>
</dbReference>
<dbReference type="GO" id="GO:0006231">
    <property type="term" value="P:dTMP biosynthetic process"/>
    <property type="evidence" value="ECO:0000318"/>
    <property type="project" value="GO_Central"/>
</dbReference>
<dbReference type="GO" id="GO:0006226">
    <property type="term" value="P:dUMP biosynthetic process"/>
    <property type="evidence" value="ECO:0000318"/>
    <property type="project" value="GO_Central"/>
</dbReference>
<dbReference type="CDD" id="cd01286">
    <property type="entry name" value="deoxycytidylate_deaminase"/>
    <property type="match status" value="1"/>
</dbReference>
<dbReference type="FunFam" id="3.40.140.10:FF:000035">
    <property type="entry name" value="dCMP deaminase"/>
    <property type="match status" value="1"/>
</dbReference>
<dbReference type="Gene3D" id="3.40.140.10">
    <property type="entry name" value="Cytidine Deaminase, domain 2"/>
    <property type="match status" value="1"/>
</dbReference>
<dbReference type="Gene3D" id="3.40.50.300">
    <property type="entry name" value="P-loop containing nucleotide triphosphate hydrolases"/>
    <property type="match status" value="1"/>
</dbReference>
<dbReference type="InterPro" id="IPR016192">
    <property type="entry name" value="APOBEC/CMP_deaminase_Zn-bd"/>
</dbReference>
<dbReference type="InterPro" id="IPR002125">
    <property type="entry name" value="CMP_dCMP_dom"/>
</dbReference>
<dbReference type="InterPro" id="IPR016193">
    <property type="entry name" value="Cytidine_deaminase-like"/>
</dbReference>
<dbReference type="InterPro" id="IPR015517">
    <property type="entry name" value="dCMP_deaminase-rel"/>
</dbReference>
<dbReference type="InterPro" id="IPR035105">
    <property type="entry name" value="Deoxycytidylate_deaminase_dom"/>
</dbReference>
<dbReference type="InterPro" id="IPR027417">
    <property type="entry name" value="P-loop_NTPase"/>
</dbReference>
<dbReference type="PANTHER" id="PTHR11086:SF18">
    <property type="entry name" value="DEOXYCYTIDYLATE DEAMINASE"/>
    <property type="match status" value="1"/>
</dbReference>
<dbReference type="PANTHER" id="PTHR11086">
    <property type="entry name" value="DEOXYCYTIDYLATE DEAMINASE-RELATED"/>
    <property type="match status" value="1"/>
</dbReference>
<dbReference type="Pfam" id="PF00383">
    <property type="entry name" value="dCMP_cyt_deam_1"/>
    <property type="match status" value="1"/>
</dbReference>
<dbReference type="SUPFAM" id="SSF53927">
    <property type="entry name" value="Cytidine deaminase-like"/>
    <property type="match status" value="1"/>
</dbReference>
<dbReference type="SUPFAM" id="SSF52540">
    <property type="entry name" value="P-loop containing nucleoside triphosphate hydrolases"/>
    <property type="match status" value="1"/>
</dbReference>
<dbReference type="PROSITE" id="PS00903">
    <property type="entry name" value="CYT_DCMP_DEAMINASES_1"/>
    <property type="match status" value="1"/>
</dbReference>
<dbReference type="PROSITE" id="PS51747">
    <property type="entry name" value="CYT_DCMP_DEAMINASES_2"/>
    <property type="match status" value="1"/>
</dbReference>
<sequence>MPTVGLTGPLCSGKDAVVEYLETKHGFNAIFRLPQLNEDGEYIYRTGDLVLGSVDDLISYLTPRWRERFVINGIHSPRLLSALLKRPFFLLVYIDAPIMLRFNRYKTYSSLANTTLEEFCSIQDAAAFQSDNAGTRHRALANLLINNDSNIKLHLWEKLQKADLLNPNRFRPSWDSYFMEMASLAAKRSNCMKRRVGCVLVRGNRVIATGYNGTPRGATNCNEGGCPRCNSASSCGKELDTCLCLHAEENALLEAGRERVGNNAILYCDTCPCLTCSVKITQLGIKEVVYHTSYNMDSHTASLLQAAGVQLRQYIPPENSIF</sequence>
<protein>
    <recommendedName>
        <fullName>Deoxycytidylate deaminase</fullName>
        <ecNumber>3.5.4.12</ecNumber>
    </recommendedName>
    <alternativeName>
        <fullName>dCMP deaminase</fullName>
    </alternativeName>
</protein>
<keyword id="KW-0963">Cytoplasm</keyword>
<keyword id="KW-0378">Hydrolase</keyword>
<keyword id="KW-0479">Metal-binding</keyword>
<keyword id="KW-0545">Nucleotide biosynthesis</keyword>
<keyword id="KW-0539">Nucleus</keyword>
<keyword id="KW-1185">Reference proteome</keyword>
<keyword id="KW-0862">Zinc</keyword>
<name>DCTD_SCHPO</name>
<feature type="chain" id="PRO_0000310830" description="Deoxycytidylate deaminase">
    <location>
        <begin position="1"/>
        <end position="322"/>
    </location>
</feature>
<feature type="domain" description="CMP/dCMP-type deaminase" evidence="5">
    <location>
        <begin position="173"/>
        <end position="311"/>
    </location>
</feature>
<feature type="active site" description="Proton donor" evidence="1">
    <location>
        <position position="248"/>
    </location>
</feature>
<feature type="binding site" evidence="1">
    <location>
        <position position="246"/>
    </location>
    <ligand>
        <name>Zn(2+)</name>
        <dbReference type="ChEBI" id="CHEBI:29105"/>
        <note>catalytic</note>
    </ligand>
</feature>
<feature type="binding site" evidence="1">
    <location>
        <position position="273"/>
    </location>
    <ligand>
        <name>Zn(2+)</name>
        <dbReference type="ChEBI" id="CHEBI:29105"/>
        <note>catalytic</note>
    </ligand>
</feature>
<feature type="binding site" evidence="1">
    <location>
        <position position="276"/>
    </location>
    <ligand>
        <name>Zn(2+)</name>
        <dbReference type="ChEBI" id="CHEBI:29105"/>
        <note>catalytic</note>
    </ligand>
</feature>
<organism>
    <name type="scientific">Schizosaccharomyces pombe (strain 972 / ATCC 24843)</name>
    <name type="common">Fission yeast</name>
    <dbReference type="NCBI Taxonomy" id="284812"/>
    <lineage>
        <taxon>Eukaryota</taxon>
        <taxon>Fungi</taxon>
        <taxon>Dikarya</taxon>
        <taxon>Ascomycota</taxon>
        <taxon>Taphrinomycotina</taxon>
        <taxon>Schizosaccharomycetes</taxon>
        <taxon>Schizosaccharomycetales</taxon>
        <taxon>Schizosaccharomycetaceae</taxon>
        <taxon>Schizosaccharomyces</taxon>
    </lineage>
</organism>
<proteinExistence type="inferred from homology"/>